<reference key="1">
    <citation type="submission" date="2007-09" db="EMBL/GenBank/DDBJ databases">
        <title>Complete genome sequence of Rickettsia rickettsii.</title>
        <authorList>
            <person name="Madan A."/>
            <person name="Fahey J."/>
            <person name="Helton E."/>
            <person name="Ketteman M."/>
            <person name="Madan A."/>
            <person name="Rodrigues S."/>
            <person name="Sanchez A."/>
            <person name="Dasch G."/>
            <person name="Eremeeva M."/>
        </authorList>
    </citation>
    <scope>NUCLEOTIDE SEQUENCE [LARGE SCALE GENOMIC DNA]</scope>
    <source>
        <strain>Sheila Smith</strain>
    </source>
</reference>
<feature type="chain" id="PRO_1000051312" description="Small ribosomal subunit protein uS9">
    <location>
        <begin position="1"/>
        <end position="159"/>
    </location>
</feature>
<keyword id="KW-0687">Ribonucleoprotein</keyword>
<keyword id="KW-0689">Ribosomal protein</keyword>
<name>RS9_RICRS</name>
<sequence length="159" mass="18000">MPELKIKTEKVEKQLTKEPLVLKTPKEKIDNLGKFYATGKRKNAIARVWLKVGKGKIVVNKKTIAQYFPSETYVKTILQPFVLTKTIDQYDIICTVRGGGISGQKGAILHGISKALDKSAPDFRAILRKGGLLTRDSRVVERKKYGQRKARKKTQFSKR</sequence>
<protein>
    <recommendedName>
        <fullName evidence="1">Small ribosomal subunit protein uS9</fullName>
    </recommendedName>
    <alternativeName>
        <fullName evidence="2">30S ribosomal protein S9</fullName>
    </alternativeName>
</protein>
<evidence type="ECO:0000255" key="1">
    <source>
        <dbReference type="HAMAP-Rule" id="MF_00532"/>
    </source>
</evidence>
<evidence type="ECO:0000305" key="2"/>
<accession>A8GRA1</accession>
<dbReference type="EMBL" id="CP000848">
    <property type="protein sequence ID" value="ABV75926.1"/>
    <property type="molecule type" value="Genomic_DNA"/>
</dbReference>
<dbReference type="RefSeq" id="WP_012150530.1">
    <property type="nucleotide sequence ID" value="NZ_CP121767.1"/>
</dbReference>
<dbReference type="SMR" id="A8GRA1"/>
<dbReference type="GeneID" id="79937091"/>
<dbReference type="KEGG" id="rri:A1G_01800"/>
<dbReference type="HOGENOM" id="CLU_046483_2_0_5"/>
<dbReference type="Proteomes" id="UP000006832">
    <property type="component" value="Chromosome"/>
</dbReference>
<dbReference type="GO" id="GO:0022627">
    <property type="term" value="C:cytosolic small ribosomal subunit"/>
    <property type="evidence" value="ECO:0007669"/>
    <property type="project" value="TreeGrafter"/>
</dbReference>
<dbReference type="GO" id="GO:0003723">
    <property type="term" value="F:RNA binding"/>
    <property type="evidence" value="ECO:0007669"/>
    <property type="project" value="TreeGrafter"/>
</dbReference>
<dbReference type="GO" id="GO:0003735">
    <property type="term" value="F:structural constituent of ribosome"/>
    <property type="evidence" value="ECO:0007669"/>
    <property type="project" value="InterPro"/>
</dbReference>
<dbReference type="GO" id="GO:0006412">
    <property type="term" value="P:translation"/>
    <property type="evidence" value="ECO:0007669"/>
    <property type="project" value="UniProtKB-UniRule"/>
</dbReference>
<dbReference type="FunFam" id="3.30.230.10:FF:000001">
    <property type="entry name" value="30S ribosomal protein S9"/>
    <property type="match status" value="1"/>
</dbReference>
<dbReference type="Gene3D" id="3.30.230.10">
    <property type="match status" value="1"/>
</dbReference>
<dbReference type="HAMAP" id="MF_00532_B">
    <property type="entry name" value="Ribosomal_uS9_B"/>
    <property type="match status" value="1"/>
</dbReference>
<dbReference type="InterPro" id="IPR020568">
    <property type="entry name" value="Ribosomal_Su5_D2-typ_SF"/>
</dbReference>
<dbReference type="InterPro" id="IPR000754">
    <property type="entry name" value="Ribosomal_uS9"/>
</dbReference>
<dbReference type="InterPro" id="IPR023035">
    <property type="entry name" value="Ribosomal_uS9_bac/plastid"/>
</dbReference>
<dbReference type="InterPro" id="IPR020574">
    <property type="entry name" value="Ribosomal_uS9_CS"/>
</dbReference>
<dbReference type="InterPro" id="IPR014721">
    <property type="entry name" value="Ribsml_uS5_D2-typ_fold_subgr"/>
</dbReference>
<dbReference type="NCBIfam" id="NF001099">
    <property type="entry name" value="PRK00132.1"/>
    <property type="match status" value="1"/>
</dbReference>
<dbReference type="PANTHER" id="PTHR21569">
    <property type="entry name" value="RIBOSOMAL PROTEIN S9"/>
    <property type="match status" value="1"/>
</dbReference>
<dbReference type="PANTHER" id="PTHR21569:SF1">
    <property type="entry name" value="SMALL RIBOSOMAL SUBUNIT PROTEIN US9M"/>
    <property type="match status" value="1"/>
</dbReference>
<dbReference type="Pfam" id="PF00380">
    <property type="entry name" value="Ribosomal_S9"/>
    <property type="match status" value="1"/>
</dbReference>
<dbReference type="SUPFAM" id="SSF54211">
    <property type="entry name" value="Ribosomal protein S5 domain 2-like"/>
    <property type="match status" value="1"/>
</dbReference>
<dbReference type="PROSITE" id="PS00360">
    <property type="entry name" value="RIBOSOMAL_S9"/>
    <property type="match status" value="1"/>
</dbReference>
<comment type="similarity">
    <text evidence="1">Belongs to the universal ribosomal protein uS9 family.</text>
</comment>
<gene>
    <name evidence="1" type="primary">rpsI</name>
    <name type="ordered locus">A1G_01800</name>
</gene>
<proteinExistence type="inferred from homology"/>
<organism>
    <name type="scientific">Rickettsia rickettsii (strain Sheila Smith)</name>
    <dbReference type="NCBI Taxonomy" id="392021"/>
    <lineage>
        <taxon>Bacteria</taxon>
        <taxon>Pseudomonadati</taxon>
        <taxon>Pseudomonadota</taxon>
        <taxon>Alphaproteobacteria</taxon>
        <taxon>Rickettsiales</taxon>
        <taxon>Rickettsiaceae</taxon>
        <taxon>Rickettsieae</taxon>
        <taxon>Rickettsia</taxon>
        <taxon>spotted fever group</taxon>
    </lineage>
</organism>